<comment type="subcellular location">
    <subcellularLocation>
        <location evidence="2">Endoplasmic reticulum membrane</location>
        <topology evidence="1">Single-pass membrane protein</topology>
    </subcellularLocation>
    <subcellularLocation>
        <location evidence="2">Nucleus membrane</location>
        <topology evidence="1">Single-pass membrane protein</topology>
    </subcellularLocation>
</comment>
<comment type="tissue specificity">
    <text evidence="2">Testis-specific. Expressed in spermatogenic cells of testis but disappear by the time mature spermatozoa are formed (at protein level).</text>
</comment>
<dbReference type="FunCoup" id="D3ZNV2">
    <property type="interactions" value="4"/>
</dbReference>
<dbReference type="STRING" id="10116.ENSRNOP00000006809"/>
<dbReference type="PaxDb" id="10116-ENSRNOP00000006809"/>
<dbReference type="Ensembl" id="ENSRNOT00000006809.8">
    <property type="protein sequence ID" value="ENSRNOP00000006809.6"/>
    <property type="gene ID" value="ENSRNOG00000005100.8"/>
</dbReference>
<dbReference type="Ensembl" id="ENSRNOT00055005315">
    <property type="protein sequence ID" value="ENSRNOP00055003943"/>
    <property type="gene ID" value="ENSRNOG00055003423"/>
</dbReference>
<dbReference type="Ensembl" id="ENSRNOT00060039104">
    <property type="protein sequence ID" value="ENSRNOP00060032333"/>
    <property type="gene ID" value="ENSRNOG00060022554"/>
</dbReference>
<dbReference type="AGR" id="RGD:1565206"/>
<dbReference type="RGD" id="1565206">
    <property type="gene designation" value="Tmco5a"/>
</dbReference>
<dbReference type="VEuPathDB" id="HostDB:ENSRNOG00000005100"/>
<dbReference type="eggNOG" id="ENOG502TDSB">
    <property type="taxonomic scope" value="Eukaryota"/>
</dbReference>
<dbReference type="GeneTree" id="ENSGT00940000153380"/>
<dbReference type="HOGENOM" id="CLU_061400_0_0_1"/>
<dbReference type="InParanoid" id="D3ZNV2"/>
<dbReference type="OMA" id="EREICKG"/>
<dbReference type="TreeFam" id="TF337140"/>
<dbReference type="Proteomes" id="UP000002494">
    <property type="component" value="Chromosome 3"/>
</dbReference>
<dbReference type="Bgee" id="ENSRNOG00000005100">
    <property type="expression patterns" value="Expressed in testis and 1 other cell type or tissue"/>
</dbReference>
<dbReference type="GO" id="GO:0005789">
    <property type="term" value="C:endoplasmic reticulum membrane"/>
    <property type="evidence" value="ECO:0007669"/>
    <property type="project" value="UniProtKB-SubCell"/>
</dbReference>
<dbReference type="GO" id="GO:0016020">
    <property type="term" value="C:membrane"/>
    <property type="evidence" value="ECO:0007669"/>
    <property type="project" value="UniProtKB-KW"/>
</dbReference>
<dbReference type="GO" id="GO:0031965">
    <property type="term" value="C:nuclear membrane"/>
    <property type="evidence" value="ECO:0007669"/>
    <property type="project" value="UniProtKB-SubCell"/>
</dbReference>
<dbReference type="InterPro" id="IPR026617">
    <property type="entry name" value="SMCO2/5"/>
</dbReference>
<dbReference type="PANTHER" id="PTHR22422:SF7">
    <property type="entry name" value="TRANSMEMBRANE AND COILED-COIL DOMAIN-CONTAINING PROTEIN 5A"/>
    <property type="match status" value="1"/>
</dbReference>
<dbReference type="PANTHER" id="PTHR22422">
    <property type="entry name" value="TRANSMEMBRANE AND COILED-COIL DOMAIN-CONTAINING PROTEIN 5B-RELATED"/>
    <property type="match status" value="1"/>
</dbReference>
<dbReference type="Pfam" id="PF14992">
    <property type="entry name" value="TMCO5"/>
    <property type="match status" value="1"/>
</dbReference>
<name>TMC5A_RAT</name>
<evidence type="ECO:0000255" key="1"/>
<evidence type="ECO:0000269" key="2">
    <source>
    </source>
</evidence>
<sequence>MEILRLAQSKKNIISLNMDLERDMQRIDEANQELLLKIQEKESEVQRLEHEITQTGDPAEDEEWEKENYTVMEREQALQELEEETARLERKNETLVHSISELQRKLTRKSQKIVRCEQGDLERTPEESKVKLQLLESSCADQEKELGKIMEDYVFVSQLCEDQALCIKKYQEALKRIEEELETGYLEREVSKVLSMDSEREKTVSLNEKDGFISNGALRFSKRIFRSLLFSTLFFIRLLGYLIFHLSFINPDLLVNALPKILSRDVLWKLRCFLFPSLTLETEDMLPH</sequence>
<gene>
    <name type="primary">Tmco5a</name>
    <name type="synonym">Tmco5</name>
</gene>
<feature type="chain" id="PRO_0000462004" description="Transmembrane and coiled-coil domain-containing protein 5A">
    <location>
        <begin position="1"/>
        <end position="288"/>
    </location>
</feature>
<feature type="transmembrane region" description="Helical" evidence="1">
    <location>
        <begin position="227"/>
        <end position="249"/>
    </location>
</feature>
<feature type="coiled-coil region" evidence="1">
    <location>
        <begin position="13"/>
        <end position="105"/>
    </location>
</feature>
<protein>
    <recommendedName>
        <fullName>Transmembrane and coiled-coil domain-containing protein 5A</fullName>
    </recommendedName>
</protein>
<keyword id="KW-0175">Coiled coil</keyword>
<keyword id="KW-0256">Endoplasmic reticulum</keyword>
<keyword id="KW-0472">Membrane</keyword>
<keyword id="KW-0539">Nucleus</keyword>
<keyword id="KW-1185">Reference proteome</keyword>
<keyword id="KW-0812">Transmembrane</keyword>
<keyword id="KW-1133">Transmembrane helix</keyword>
<reference key="1">
    <citation type="journal article" date="2004" name="Nature">
        <title>Genome sequence of the Brown Norway rat yields insights into mammalian evolution.</title>
        <authorList>
            <person name="Gibbs R.A."/>
            <person name="Weinstock G.M."/>
            <person name="Metzker M.L."/>
            <person name="Muzny D.M."/>
            <person name="Sodergren E.J."/>
            <person name="Scherer S."/>
            <person name="Scott G."/>
            <person name="Steffen D."/>
            <person name="Worley K.C."/>
            <person name="Burch P.E."/>
            <person name="Okwuonu G."/>
            <person name="Hines S."/>
            <person name="Lewis L."/>
            <person name="Deramo C."/>
            <person name="Delgado O."/>
            <person name="Dugan-Rocha S."/>
            <person name="Miner G."/>
            <person name="Morgan M."/>
            <person name="Hawes A."/>
            <person name="Gill R."/>
            <person name="Holt R.A."/>
            <person name="Adams M.D."/>
            <person name="Amanatides P.G."/>
            <person name="Baden-Tillson H."/>
            <person name="Barnstead M."/>
            <person name="Chin S."/>
            <person name="Evans C.A."/>
            <person name="Ferriera S."/>
            <person name="Fosler C."/>
            <person name="Glodek A."/>
            <person name="Gu Z."/>
            <person name="Jennings D."/>
            <person name="Kraft C.L."/>
            <person name="Nguyen T."/>
            <person name="Pfannkoch C.M."/>
            <person name="Sitter C."/>
            <person name="Sutton G.G."/>
            <person name="Venter J.C."/>
            <person name="Woodage T."/>
            <person name="Smith D."/>
            <person name="Lee H.-M."/>
            <person name="Gustafson E."/>
            <person name="Cahill P."/>
            <person name="Kana A."/>
            <person name="Doucette-Stamm L."/>
            <person name="Weinstock K."/>
            <person name="Fechtel K."/>
            <person name="Weiss R.B."/>
            <person name="Dunn D.M."/>
            <person name="Green E.D."/>
            <person name="Blakesley R.W."/>
            <person name="Bouffard G.G."/>
            <person name="De Jong P.J."/>
            <person name="Osoegawa K."/>
            <person name="Zhu B."/>
            <person name="Marra M."/>
            <person name="Schein J."/>
            <person name="Bosdet I."/>
            <person name="Fjell C."/>
            <person name="Jones S."/>
            <person name="Krzywinski M."/>
            <person name="Mathewson C."/>
            <person name="Siddiqui A."/>
            <person name="Wye N."/>
            <person name="McPherson J."/>
            <person name="Zhao S."/>
            <person name="Fraser C.M."/>
            <person name="Shetty J."/>
            <person name="Shatsman S."/>
            <person name="Geer K."/>
            <person name="Chen Y."/>
            <person name="Abramzon S."/>
            <person name="Nierman W.C."/>
            <person name="Havlak P.H."/>
            <person name="Chen R."/>
            <person name="Durbin K.J."/>
            <person name="Egan A."/>
            <person name="Ren Y."/>
            <person name="Song X.-Z."/>
            <person name="Li B."/>
            <person name="Liu Y."/>
            <person name="Qin X."/>
            <person name="Cawley S."/>
            <person name="Cooney A.J."/>
            <person name="D'Souza L.M."/>
            <person name="Martin K."/>
            <person name="Wu J.Q."/>
            <person name="Gonzalez-Garay M.L."/>
            <person name="Jackson A.R."/>
            <person name="Kalafus K.J."/>
            <person name="McLeod M.P."/>
            <person name="Milosavljevic A."/>
            <person name="Virk D."/>
            <person name="Volkov A."/>
            <person name="Wheeler D.A."/>
            <person name="Zhang Z."/>
            <person name="Bailey J.A."/>
            <person name="Eichler E.E."/>
            <person name="Tuzun E."/>
            <person name="Birney E."/>
            <person name="Mongin E."/>
            <person name="Ureta-Vidal A."/>
            <person name="Woodwark C."/>
            <person name="Zdobnov E."/>
            <person name="Bork P."/>
            <person name="Suyama M."/>
            <person name="Torrents D."/>
            <person name="Alexandersson M."/>
            <person name="Trask B.J."/>
            <person name="Young J.M."/>
            <person name="Huang H."/>
            <person name="Wang H."/>
            <person name="Xing H."/>
            <person name="Daniels S."/>
            <person name="Gietzen D."/>
            <person name="Schmidt J."/>
            <person name="Stevens K."/>
            <person name="Vitt U."/>
            <person name="Wingrove J."/>
            <person name="Camara F."/>
            <person name="Mar Alba M."/>
            <person name="Abril J.F."/>
            <person name="Guigo R."/>
            <person name="Smit A."/>
            <person name="Dubchak I."/>
            <person name="Rubin E.M."/>
            <person name="Couronne O."/>
            <person name="Poliakov A."/>
            <person name="Huebner N."/>
            <person name="Ganten D."/>
            <person name="Goesele C."/>
            <person name="Hummel O."/>
            <person name="Kreitler T."/>
            <person name="Lee Y.-A."/>
            <person name="Monti J."/>
            <person name="Schulz H."/>
            <person name="Zimdahl H."/>
            <person name="Himmelbauer H."/>
            <person name="Lehrach H."/>
            <person name="Jacob H.J."/>
            <person name="Bromberg S."/>
            <person name="Gullings-Handley J."/>
            <person name="Jensen-Seaman M.I."/>
            <person name="Kwitek A.E."/>
            <person name="Lazar J."/>
            <person name="Pasko D."/>
            <person name="Tonellato P.J."/>
            <person name="Twigger S."/>
            <person name="Ponting C.P."/>
            <person name="Duarte J.M."/>
            <person name="Rice S."/>
            <person name="Goodstadt L."/>
            <person name="Beatson S.A."/>
            <person name="Emes R.D."/>
            <person name="Winter E.E."/>
            <person name="Webber C."/>
            <person name="Brandt P."/>
            <person name="Nyakatura G."/>
            <person name="Adetobi M."/>
            <person name="Chiaromonte F."/>
            <person name="Elnitski L."/>
            <person name="Eswara P."/>
            <person name="Hardison R.C."/>
            <person name="Hou M."/>
            <person name="Kolbe D."/>
            <person name="Makova K."/>
            <person name="Miller W."/>
            <person name="Nekrutenko A."/>
            <person name="Riemer C."/>
            <person name="Schwartz S."/>
            <person name="Taylor J."/>
            <person name="Yang S."/>
            <person name="Zhang Y."/>
            <person name="Lindpaintner K."/>
            <person name="Andrews T.D."/>
            <person name="Caccamo M."/>
            <person name="Clamp M."/>
            <person name="Clarke L."/>
            <person name="Curwen V."/>
            <person name="Durbin R.M."/>
            <person name="Eyras E."/>
            <person name="Searle S.M."/>
            <person name="Cooper G.M."/>
            <person name="Batzoglou S."/>
            <person name="Brudno M."/>
            <person name="Sidow A."/>
            <person name="Stone E.A."/>
            <person name="Payseur B.A."/>
            <person name="Bourque G."/>
            <person name="Lopez-Otin C."/>
            <person name="Puente X.S."/>
            <person name="Chakrabarti K."/>
            <person name="Chatterji S."/>
            <person name="Dewey C."/>
            <person name="Pachter L."/>
            <person name="Bray N."/>
            <person name="Yap V.B."/>
            <person name="Caspi A."/>
            <person name="Tesler G."/>
            <person name="Pevzner P.A."/>
            <person name="Haussler D."/>
            <person name="Roskin K.M."/>
            <person name="Baertsch R."/>
            <person name="Clawson H."/>
            <person name="Furey T.S."/>
            <person name="Hinrichs A.S."/>
            <person name="Karolchik D."/>
            <person name="Kent W.J."/>
            <person name="Rosenbloom K.R."/>
            <person name="Trumbower H."/>
            <person name="Weirauch M."/>
            <person name="Cooper D.N."/>
            <person name="Stenson P.D."/>
            <person name="Ma B."/>
            <person name="Brent M."/>
            <person name="Arumugam M."/>
            <person name="Shteynberg D."/>
            <person name="Copley R.R."/>
            <person name="Taylor M.S."/>
            <person name="Riethman H."/>
            <person name="Mudunuri U."/>
            <person name="Peterson J."/>
            <person name="Guyer M."/>
            <person name="Felsenfeld A."/>
            <person name="Old S."/>
            <person name="Mockrin S."/>
            <person name="Collins F.S."/>
        </authorList>
    </citation>
    <scope>NUCLEOTIDE SEQUENCE [LARGE SCALE GENOMIC DNA]</scope>
    <source>
        <strain>Brown Norway</strain>
    </source>
</reference>
<reference key="2">
    <citation type="journal article" date="2019" name="Mol. Reprod. Dev.">
        <title>A membrane protein, TMCO5A, has a close relationship with manchette microtubules in rat spermatids during spermiogenesis.</title>
        <authorList>
            <person name="Kaneko T."/>
            <person name="Minohara T."/>
            <person name="Shima S."/>
            <person name="Yoshida K."/>
            <person name="Fukuda A."/>
            <person name="Iwamori N."/>
            <person name="Inai T."/>
            <person name="Iida H."/>
        </authorList>
    </citation>
    <scope>SUBCELLULAR LOCATION</scope>
    <scope>TISSUE SPECIFICITY</scope>
</reference>
<organism>
    <name type="scientific">Rattus norvegicus</name>
    <name type="common">Rat</name>
    <dbReference type="NCBI Taxonomy" id="10116"/>
    <lineage>
        <taxon>Eukaryota</taxon>
        <taxon>Metazoa</taxon>
        <taxon>Chordata</taxon>
        <taxon>Craniata</taxon>
        <taxon>Vertebrata</taxon>
        <taxon>Euteleostomi</taxon>
        <taxon>Mammalia</taxon>
        <taxon>Eutheria</taxon>
        <taxon>Euarchontoglires</taxon>
        <taxon>Glires</taxon>
        <taxon>Rodentia</taxon>
        <taxon>Myomorpha</taxon>
        <taxon>Muroidea</taxon>
        <taxon>Muridae</taxon>
        <taxon>Murinae</taxon>
        <taxon>Rattus</taxon>
    </lineage>
</organism>
<accession>D3ZNV2</accession>
<accession>A0A8I6A3G0</accession>
<proteinExistence type="evidence at protein level"/>